<keyword id="KW-0175">Coiled coil</keyword>
<keyword id="KW-0472">Membrane</keyword>
<keyword id="KW-1185">Reference proteome</keyword>
<keyword id="KW-0812">Transmembrane</keyword>
<keyword id="KW-1133">Transmembrane helix</keyword>
<proteinExistence type="evidence at transcript level"/>
<reference key="1">
    <citation type="journal article" date="2004" name="Genome Res.">
        <title>The status, quality, and expansion of the NIH full-length cDNA project: the Mammalian Gene Collection (MGC).</title>
        <authorList>
            <consortium name="The MGC Project Team"/>
        </authorList>
    </citation>
    <scope>NUCLEOTIDE SEQUENCE [LARGE SCALE MRNA]</scope>
    <source>
        <tissue>Prostate</tissue>
    </source>
</reference>
<accession>Q499U8</accession>
<feature type="chain" id="PRO_0000305151" description="Transmembrane and coiled-coil domain-containing protein 4">
    <location>
        <begin position="1"/>
        <end position="631"/>
    </location>
</feature>
<feature type="transmembrane region" description="Helical" evidence="1">
    <location>
        <begin position="187"/>
        <end position="203"/>
    </location>
</feature>
<feature type="transmembrane region" description="Helical" evidence="1">
    <location>
        <begin position="204"/>
        <end position="220"/>
    </location>
</feature>
<feature type="transmembrane region" description="Helical" evidence="1">
    <location>
        <begin position="228"/>
        <end position="248"/>
    </location>
</feature>
<feature type="transmembrane region" description="Helical" evidence="1">
    <location>
        <begin position="343"/>
        <end position="363"/>
    </location>
</feature>
<feature type="region of interest" description="Disordered" evidence="2">
    <location>
        <begin position="1"/>
        <end position="26"/>
    </location>
</feature>
<feature type="region of interest" description="Disordered" evidence="2">
    <location>
        <begin position="523"/>
        <end position="631"/>
    </location>
</feature>
<feature type="coiled-coil region" evidence="1">
    <location>
        <begin position="153"/>
        <end position="183"/>
    </location>
</feature>
<feature type="compositionally biased region" description="Polar residues" evidence="2">
    <location>
        <begin position="571"/>
        <end position="590"/>
    </location>
</feature>
<protein>
    <recommendedName>
        <fullName>Transmembrane and coiled-coil domain-containing protein 4</fullName>
    </recommendedName>
</protein>
<dbReference type="EMBL" id="BC099755">
    <property type="protein sequence ID" value="AAH99755.1"/>
    <property type="molecule type" value="mRNA"/>
</dbReference>
<dbReference type="RefSeq" id="NP_001030121.1">
    <property type="nucleotide sequence ID" value="NM_001034949.1"/>
</dbReference>
<dbReference type="FunCoup" id="Q499U8">
    <property type="interactions" value="396"/>
</dbReference>
<dbReference type="STRING" id="10116.ENSRNOP00000073933"/>
<dbReference type="ESTHER" id="rat-tmco4">
    <property type="family name" value="Duf_726"/>
</dbReference>
<dbReference type="PhosphoSitePlus" id="Q499U8"/>
<dbReference type="PaxDb" id="10116-ENSRNOP00000023431"/>
<dbReference type="GeneID" id="500573"/>
<dbReference type="KEGG" id="rno:500573"/>
<dbReference type="UCSC" id="RGD:1566357">
    <property type="organism name" value="rat"/>
</dbReference>
<dbReference type="AGR" id="RGD:1566357"/>
<dbReference type="CTD" id="255104"/>
<dbReference type="RGD" id="1566357">
    <property type="gene designation" value="Tmco4"/>
</dbReference>
<dbReference type="eggNOG" id="KOG2385">
    <property type="taxonomic scope" value="Eukaryota"/>
</dbReference>
<dbReference type="InParanoid" id="Q499U8"/>
<dbReference type="OrthoDB" id="277931at2759"/>
<dbReference type="PhylomeDB" id="Q499U8"/>
<dbReference type="PRO" id="PR:Q499U8"/>
<dbReference type="Proteomes" id="UP000002494">
    <property type="component" value="Unplaced"/>
</dbReference>
<dbReference type="GO" id="GO:0016020">
    <property type="term" value="C:membrane"/>
    <property type="evidence" value="ECO:0007669"/>
    <property type="project" value="UniProtKB-SubCell"/>
</dbReference>
<dbReference type="InterPro" id="IPR029058">
    <property type="entry name" value="AB_hydrolase_fold"/>
</dbReference>
<dbReference type="InterPro" id="IPR007941">
    <property type="entry name" value="DUF726"/>
</dbReference>
<dbReference type="PANTHER" id="PTHR17920:SF3">
    <property type="entry name" value="TRANSMEMBRANE AND COILED-COIL DOMAIN-CONTAINING PROTEIN 4"/>
    <property type="match status" value="1"/>
</dbReference>
<dbReference type="PANTHER" id="PTHR17920">
    <property type="entry name" value="TRANSMEMBRANE AND COILED-COIL DOMAIN-CONTAINING PROTEIN 4 TMCO4"/>
    <property type="match status" value="1"/>
</dbReference>
<dbReference type="Pfam" id="PF05277">
    <property type="entry name" value="DUF726"/>
    <property type="match status" value="1"/>
</dbReference>
<dbReference type="SUPFAM" id="SSF53474">
    <property type="entry name" value="alpha/beta-Hydrolases"/>
    <property type="match status" value="1"/>
</dbReference>
<name>TMCO4_RAT</name>
<organism>
    <name type="scientific">Rattus norvegicus</name>
    <name type="common">Rat</name>
    <dbReference type="NCBI Taxonomy" id="10116"/>
    <lineage>
        <taxon>Eukaryota</taxon>
        <taxon>Metazoa</taxon>
        <taxon>Chordata</taxon>
        <taxon>Craniata</taxon>
        <taxon>Vertebrata</taxon>
        <taxon>Euteleostomi</taxon>
        <taxon>Mammalia</taxon>
        <taxon>Eutheria</taxon>
        <taxon>Euarchontoglires</taxon>
        <taxon>Glires</taxon>
        <taxon>Rodentia</taxon>
        <taxon>Myomorpha</taxon>
        <taxon>Muroidea</taxon>
        <taxon>Muridae</taxon>
        <taxon>Murinae</taxon>
        <taxon>Rattus</taxon>
    </lineage>
</organism>
<sequence>MATWNRPHPRLPVAPEPVAEGESQQPLGRELSEANRFAYAALCGISLSQLFPEPEQSSFCSEFVTGLVKWLHLSETVLPTMMAFASGLGGKGDDIFAQTLLKDPILKDNPSAISQDLLSFSLKDGHYDARARVLVCHVISLLQVPMEELDILEEVFLESLKDAKEEESETAEESRKRKEKRRKWKRYLLIGLATVGGGTVIGVTGGLAAPLVAAGAATIIGSAGAAALGSVAGIAVMTSLFGAAGAGLTGYKMKKRVGAIEEFMFLPLTDGKQLHITIAITGWLGSGRYRTFNAPWMALARSQEQYCLAWEAKYLMELGNALETILSGLANMVAQEALKYTVLSGIVAALTLPASLLSVANVIDNPWGVCLHRSAEVGKHLAHILLSRQQGRRPVTLIGFSLGARVIYFCLQEMAQEQDCQGIIEDVVLLGAPVEGDPKYWEPFRNVVSGRIINGYCRGDWLLSFVYRTSSVQLRVAGLQPVLLQDRRMENVDLSSVVNGHLDYAKKMDVILKAVGIRTKPGWSEKGLPLAPGGLPQEEPLQPATVSTDETIHQDEQKQGPAPGDSLKSAIPSSASQAQVPAGLDQSTEDSLPAAAAPAEGHLVCSHGVGPNPLGCPDCTRETQESCAELD</sequence>
<gene>
    <name type="primary">Tmco4</name>
</gene>
<evidence type="ECO:0000255" key="1"/>
<evidence type="ECO:0000256" key="2">
    <source>
        <dbReference type="SAM" id="MobiDB-lite"/>
    </source>
</evidence>
<evidence type="ECO:0000305" key="3"/>
<comment type="subcellular location">
    <subcellularLocation>
        <location evidence="3">Membrane</location>
        <topology evidence="3">Multi-pass membrane protein</topology>
    </subcellularLocation>
</comment>
<comment type="similarity">
    <text evidence="3">Belongs to the TMCO4 family.</text>
</comment>